<accession>P11404</accession>
<accession>Q91W23</accession>
<comment type="function">
    <text>FABPs are thought to play a role in the intracellular transport of long-chain fatty acids and their acyl-CoA esters.</text>
</comment>
<comment type="subcellular location">
    <subcellularLocation>
        <location>Cytoplasm</location>
    </subcellularLocation>
</comment>
<comment type="domain">
    <text evidence="1">Forms a beta-barrel structure that accommodates the hydrophobic ligand in its interior.</text>
</comment>
<comment type="similarity">
    <text evidence="4">Belongs to the calycin superfamily. Fatty-acid binding protein (FABP) family.</text>
</comment>
<sequence length="133" mass="14819">MADAFVGTWKLVDSKNFDDYMKSLGVGFATRQVASMTKPTTIIEKNGDTITIKTQSTFKNTEINFQLGIEFDEVTADDRKVKSLVTLDGGKLIHVQKWNGQETTLTRELVDGKLILTLTHGSVVSTRTYEKEA</sequence>
<proteinExistence type="evidence at protein level"/>
<feature type="initiator methionine" description="Removed" evidence="3">
    <location>
        <position position="1"/>
    </location>
</feature>
<feature type="chain" id="PRO_0000067322" description="Fatty acid-binding protein, heart">
    <location>
        <begin position="2"/>
        <end position="133"/>
    </location>
</feature>
<feature type="binding site" evidence="2">
    <location>
        <begin position="127"/>
        <end position="129"/>
    </location>
    <ligand>
        <name>(9Z)-octadecenoate</name>
        <dbReference type="ChEBI" id="CHEBI:30823"/>
    </ligand>
</feature>
<feature type="binding site" evidence="2">
    <location>
        <begin position="127"/>
        <end position="129"/>
    </location>
    <ligand>
        <name>hexadecanoate</name>
        <dbReference type="ChEBI" id="CHEBI:7896"/>
    </ligand>
</feature>
<feature type="binding site" evidence="2">
    <location>
        <begin position="127"/>
        <end position="129"/>
    </location>
    <ligand>
        <name>octadecanoate</name>
        <dbReference type="ChEBI" id="CHEBI:25629"/>
    </ligand>
</feature>
<feature type="modified residue" description="N-acetylalanine" evidence="3">
    <location>
        <position position="2"/>
    </location>
</feature>
<feature type="modified residue" description="Phosphothreonine" evidence="3">
    <location>
        <position position="8"/>
    </location>
</feature>
<feature type="modified residue" description="Phosphotyrosine; by Tyr-kinases" evidence="3">
    <location>
        <position position="20"/>
    </location>
</feature>
<feature type="modified residue" description="Phosphoserine" evidence="3">
    <location>
        <position position="23"/>
    </location>
</feature>
<feature type="modified residue" description="Phosphothreonine" evidence="3">
    <location>
        <position position="30"/>
    </location>
</feature>
<feature type="modified residue" description="Phosphoserine" evidence="3">
    <location>
        <position position="83"/>
    </location>
</feature>
<feature type="sequence conflict" description="In Ref. 1; CAA33084." evidence="4" ref="1">
    <original>A</original>
    <variation>G</variation>
    <location>
        <position position="34"/>
    </location>
</feature>
<feature type="sequence conflict" description="In Ref. 1; CAA33084." evidence="4" ref="1">
    <original>N</original>
    <variation>D</variation>
    <location>
        <position position="99"/>
    </location>
</feature>
<feature type="helix" evidence="5">
    <location>
        <begin position="2"/>
        <end position="5"/>
    </location>
</feature>
<feature type="strand" evidence="5">
    <location>
        <begin position="7"/>
        <end position="16"/>
    </location>
</feature>
<feature type="helix" evidence="5">
    <location>
        <begin position="17"/>
        <end position="24"/>
    </location>
</feature>
<feature type="helix" evidence="5">
    <location>
        <begin position="28"/>
        <end position="34"/>
    </location>
</feature>
<feature type="strand" evidence="5">
    <location>
        <begin position="40"/>
        <end position="46"/>
    </location>
</feature>
<feature type="strand" evidence="5">
    <location>
        <begin position="49"/>
        <end position="55"/>
    </location>
</feature>
<feature type="strand" evidence="5">
    <location>
        <begin position="61"/>
        <end position="65"/>
    </location>
</feature>
<feature type="strand" evidence="5">
    <location>
        <begin position="71"/>
        <end position="74"/>
    </location>
</feature>
<feature type="strand" evidence="5">
    <location>
        <begin position="80"/>
        <end position="88"/>
    </location>
</feature>
<feature type="strand" evidence="5">
    <location>
        <begin position="91"/>
        <end position="98"/>
    </location>
</feature>
<feature type="strand" evidence="5">
    <location>
        <begin position="101"/>
        <end position="110"/>
    </location>
</feature>
<feature type="strand" evidence="5">
    <location>
        <begin position="113"/>
        <end position="120"/>
    </location>
</feature>
<feature type="strand" evidence="5">
    <location>
        <begin position="123"/>
        <end position="131"/>
    </location>
</feature>
<reference key="1">
    <citation type="journal article" date="1989" name="Nucleic Acids Res.">
        <title>cDNA sequence for mouse heart fatty acid binding protein, H-FABP.</title>
        <authorList>
            <person name="Tweedie S."/>
            <person name="Edwards Y."/>
        </authorList>
    </citation>
    <scope>NUCLEOTIDE SEQUENCE [MRNA]</scope>
    <source>
        <strain>C57BL/6 X CBA</strain>
    </source>
</reference>
<reference key="2">
    <citation type="submission" date="1989-08" db="EMBL/GenBank/DDBJ databases">
        <authorList>
            <person name="Tweedie S."/>
        </authorList>
    </citation>
    <scope>SEQUENCE REVISION TO 3-4</scope>
</reference>
<reference key="3">
    <citation type="journal article" date="1994" name="Gene">
        <title>Cloning and characterization of the mouse gene encoding mammary-derived growth inhibitor/heart-fatty acid-binding protein.</title>
        <authorList>
            <person name="Treuner M."/>
            <person name="Kozak C.A."/>
            <person name="Gallahan D."/>
            <person name="Grosse R."/>
            <person name="Mueller T."/>
        </authorList>
    </citation>
    <scope>NUCLEOTIDE SEQUENCE [GENOMIC DNA]</scope>
    <source>
        <strain>ICR X Swiss Webster</strain>
        <tissue>Liver</tissue>
    </source>
</reference>
<reference key="4">
    <citation type="journal article" date="1992" name="In Vitro Cell. Dev. Biol.">
        <title>Hormonal induction of functional differentiation and mammary-derived growth inhibitor expression in cultured mouse mammary gland explants.</title>
        <authorList>
            <person name="Binas B."/>
            <person name="Spitzer E."/>
            <person name="Zschiesche W."/>
            <person name="Erdmann B."/>
            <person name="Kurtz A."/>
            <person name="Mueller T."/>
            <person name="Niemann C."/>
            <person name="Blenau W."/>
            <person name="Grosse R."/>
        </authorList>
    </citation>
    <scope>NUCLEOTIDE SEQUENCE</scope>
    <source>
        <strain>BALB/cJ</strain>
        <tissue>Mammary gland</tissue>
    </source>
</reference>
<reference key="5">
    <citation type="journal article" date="2004" name="Genome Res.">
        <title>The status, quality, and expansion of the NIH full-length cDNA project: the Mammalian Gene Collection (MGC).</title>
        <authorList>
            <consortium name="The MGC Project Team"/>
        </authorList>
    </citation>
    <scope>NUCLEOTIDE SEQUENCE [LARGE SCALE MRNA]</scope>
    <source>
        <tissue>Mammary tumor</tissue>
    </source>
</reference>
<reference key="6">
    <citation type="submission" date="2007-03" db="UniProtKB">
        <authorList>
            <person name="Lubec G."/>
            <person name="Klug S."/>
        </authorList>
    </citation>
    <scope>PROTEIN SEQUENCE OF 60-79 AND 114-127</scope>
    <scope>IDENTIFICATION BY MASS SPECTROMETRY</scope>
    <source>
        <tissue>Hippocampus</tissue>
    </source>
</reference>
<reference key="7">
    <citation type="journal article" date="2010" name="Cell">
        <title>A tissue-specific atlas of mouse protein phosphorylation and expression.</title>
        <authorList>
            <person name="Huttlin E.L."/>
            <person name="Jedrychowski M.P."/>
            <person name="Elias J.E."/>
            <person name="Goswami T."/>
            <person name="Rad R."/>
            <person name="Beausoleil S.A."/>
            <person name="Villen J."/>
            <person name="Haas W."/>
            <person name="Sowa M.E."/>
            <person name="Gygi S.P."/>
        </authorList>
    </citation>
    <scope>IDENTIFICATION BY MASS SPECTROMETRY [LARGE SCALE ANALYSIS]</scope>
    <source>
        <tissue>Brain</tissue>
        <tissue>Brown adipose tissue</tissue>
        <tissue>Heart</tissue>
        <tissue>Kidney</tissue>
        <tissue>Liver</tissue>
        <tissue>Lung</tissue>
        <tissue>Spleen</tissue>
        <tissue>Testis</tissue>
    </source>
</reference>
<name>FABPH_MOUSE</name>
<organism>
    <name type="scientific">Mus musculus</name>
    <name type="common">Mouse</name>
    <dbReference type="NCBI Taxonomy" id="10090"/>
    <lineage>
        <taxon>Eukaryota</taxon>
        <taxon>Metazoa</taxon>
        <taxon>Chordata</taxon>
        <taxon>Craniata</taxon>
        <taxon>Vertebrata</taxon>
        <taxon>Euteleostomi</taxon>
        <taxon>Mammalia</taxon>
        <taxon>Eutheria</taxon>
        <taxon>Euarchontoglires</taxon>
        <taxon>Glires</taxon>
        <taxon>Rodentia</taxon>
        <taxon>Myomorpha</taxon>
        <taxon>Muroidea</taxon>
        <taxon>Muridae</taxon>
        <taxon>Murinae</taxon>
        <taxon>Mus</taxon>
        <taxon>Mus</taxon>
    </lineage>
</organism>
<keyword id="KW-0002">3D-structure</keyword>
<keyword id="KW-0007">Acetylation</keyword>
<keyword id="KW-0963">Cytoplasm</keyword>
<keyword id="KW-0903">Direct protein sequencing</keyword>
<keyword id="KW-0446">Lipid-binding</keyword>
<keyword id="KW-0597">Phosphoprotein</keyword>
<keyword id="KW-1185">Reference proteome</keyword>
<keyword id="KW-0813">Transport</keyword>
<gene>
    <name type="primary">Fabp3</name>
    <name type="synonym">Fabph1</name>
</gene>
<evidence type="ECO:0000250" key="1"/>
<evidence type="ECO:0000250" key="2">
    <source>
        <dbReference type="UniProtKB" id="P05413"/>
    </source>
</evidence>
<evidence type="ECO:0000250" key="3">
    <source>
        <dbReference type="UniProtKB" id="P07483"/>
    </source>
</evidence>
<evidence type="ECO:0000305" key="4"/>
<evidence type="ECO:0007829" key="5">
    <source>
        <dbReference type="PDB" id="7YF1"/>
    </source>
</evidence>
<dbReference type="EMBL" id="X14961">
    <property type="protein sequence ID" value="CAA33084.1"/>
    <property type="molecule type" value="mRNA"/>
</dbReference>
<dbReference type="EMBL" id="U02884">
    <property type="protein sequence ID" value="AAA61933.1"/>
    <property type="molecule type" value="Genomic_DNA"/>
</dbReference>
<dbReference type="EMBL" id="U02883">
    <property type="protein sequence ID" value="AAA03445.1"/>
    <property type="molecule type" value="mRNA"/>
</dbReference>
<dbReference type="EMBL" id="BC002082">
    <property type="protein sequence ID" value="AAH02082.1"/>
    <property type="molecule type" value="mRNA"/>
</dbReference>
<dbReference type="CCDS" id="CCDS18709.1"/>
<dbReference type="PIR" id="PC4011">
    <property type="entry name" value="PC4011"/>
</dbReference>
<dbReference type="RefSeq" id="NP_034304.1">
    <property type="nucleotide sequence ID" value="NM_010174.2"/>
</dbReference>
<dbReference type="PDB" id="7YF1">
    <property type="method" value="X-ray"/>
    <property type="resolution" value="1.70 A"/>
    <property type="chains" value="A=1-133"/>
</dbReference>
<dbReference type="PDBsum" id="7YF1"/>
<dbReference type="SMR" id="P11404"/>
<dbReference type="BioGRID" id="199582">
    <property type="interactions" value="3"/>
</dbReference>
<dbReference type="FunCoup" id="P11404">
    <property type="interactions" value="940"/>
</dbReference>
<dbReference type="IntAct" id="P11404">
    <property type="interactions" value="6"/>
</dbReference>
<dbReference type="STRING" id="10090.ENSMUSP00000070709"/>
<dbReference type="GlyGen" id="P11404">
    <property type="glycosylation" value="1 site, 1 O-linked glycan (1 site)"/>
</dbReference>
<dbReference type="iPTMnet" id="P11404"/>
<dbReference type="PhosphoSitePlus" id="P11404"/>
<dbReference type="SwissPalm" id="P11404"/>
<dbReference type="REPRODUCTION-2DPAGE" id="IPI00230124"/>
<dbReference type="REPRODUCTION-2DPAGE" id="P11404"/>
<dbReference type="CPTAC" id="non-CPTAC-3706"/>
<dbReference type="jPOST" id="P11404"/>
<dbReference type="PaxDb" id="10090-ENSMUSP00000070709"/>
<dbReference type="PeptideAtlas" id="P11404"/>
<dbReference type="ProteomicsDB" id="275846"/>
<dbReference type="Antibodypedia" id="4505">
    <property type="antibodies" value="1241 antibodies from 42 providers"/>
</dbReference>
<dbReference type="DNASU" id="14077"/>
<dbReference type="Ensembl" id="ENSMUST00000070532.8">
    <property type="protein sequence ID" value="ENSMUSP00000070709.8"/>
    <property type="gene ID" value="ENSMUSG00000028773.9"/>
</dbReference>
<dbReference type="GeneID" id="14077"/>
<dbReference type="KEGG" id="mmu:14077"/>
<dbReference type="UCSC" id="uc008uzd.1">
    <property type="organism name" value="mouse"/>
</dbReference>
<dbReference type="AGR" id="MGI:95476"/>
<dbReference type="CTD" id="2170"/>
<dbReference type="MGI" id="MGI:95476">
    <property type="gene designation" value="Fabp3"/>
</dbReference>
<dbReference type="VEuPathDB" id="HostDB:ENSMUSG00000028773"/>
<dbReference type="eggNOG" id="KOG4015">
    <property type="taxonomic scope" value="Eukaryota"/>
</dbReference>
<dbReference type="GeneTree" id="ENSGT00940000155104"/>
<dbReference type="HOGENOM" id="CLU_113772_0_0_1"/>
<dbReference type="InParanoid" id="P11404"/>
<dbReference type="OMA" id="NTEINCK"/>
<dbReference type="OrthoDB" id="354351at2759"/>
<dbReference type="PhylomeDB" id="P11404"/>
<dbReference type="TreeFam" id="TF316894"/>
<dbReference type="Reactome" id="R-MMU-163560">
    <property type="pathway name" value="Triglyceride catabolism"/>
</dbReference>
<dbReference type="BioGRID-ORCS" id="14077">
    <property type="hits" value="3 hits in 82 CRISPR screens"/>
</dbReference>
<dbReference type="ChiTaRS" id="Fabp3">
    <property type="organism name" value="mouse"/>
</dbReference>
<dbReference type="PRO" id="PR:P11404"/>
<dbReference type="Proteomes" id="UP000000589">
    <property type="component" value="Chromosome 4"/>
</dbReference>
<dbReference type="RNAct" id="P11404">
    <property type="molecule type" value="protein"/>
</dbReference>
<dbReference type="Bgee" id="ENSMUSG00000028773">
    <property type="expression patterns" value="Expressed in heart and 119 other cell types or tissues"/>
</dbReference>
<dbReference type="ExpressionAtlas" id="P11404">
    <property type="expression patterns" value="baseline and differential"/>
</dbReference>
<dbReference type="GO" id="GO:0005829">
    <property type="term" value="C:cytosol"/>
    <property type="evidence" value="ECO:0000304"/>
    <property type="project" value="BHF-UCL"/>
</dbReference>
<dbReference type="GO" id="GO:0005615">
    <property type="term" value="C:extracellular space"/>
    <property type="evidence" value="ECO:0000314"/>
    <property type="project" value="BHF-UCL"/>
</dbReference>
<dbReference type="GO" id="GO:0016528">
    <property type="term" value="C:sarcoplasm"/>
    <property type="evidence" value="ECO:0007669"/>
    <property type="project" value="Ensembl"/>
</dbReference>
<dbReference type="GO" id="GO:0008092">
    <property type="term" value="F:cytoskeletal protein binding"/>
    <property type="evidence" value="ECO:0007669"/>
    <property type="project" value="Ensembl"/>
</dbReference>
<dbReference type="GO" id="GO:0050543">
    <property type="term" value="F:icosatetraenoic acid binding"/>
    <property type="evidence" value="ECO:0007669"/>
    <property type="project" value="Ensembl"/>
</dbReference>
<dbReference type="GO" id="GO:0005324">
    <property type="term" value="F:long-chain fatty acid transmembrane transporter activity"/>
    <property type="evidence" value="ECO:0007669"/>
    <property type="project" value="Ensembl"/>
</dbReference>
<dbReference type="GO" id="GO:0070538">
    <property type="term" value="F:oleic acid binding"/>
    <property type="evidence" value="ECO:0007669"/>
    <property type="project" value="Ensembl"/>
</dbReference>
<dbReference type="GO" id="GO:0050873">
    <property type="term" value="P:brown fat cell differentiation"/>
    <property type="evidence" value="ECO:0000314"/>
    <property type="project" value="MGI"/>
</dbReference>
<dbReference type="GO" id="GO:0042632">
    <property type="term" value="P:cholesterol homeostasis"/>
    <property type="evidence" value="ECO:0000315"/>
    <property type="project" value="BHF-UCL"/>
</dbReference>
<dbReference type="GO" id="GO:0006631">
    <property type="term" value="P:fatty acid metabolic process"/>
    <property type="evidence" value="ECO:0007669"/>
    <property type="project" value="Ensembl"/>
</dbReference>
<dbReference type="GO" id="GO:0032365">
    <property type="term" value="P:intracellular lipid transport"/>
    <property type="evidence" value="ECO:0000315"/>
    <property type="project" value="BHF-UCL"/>
</dbReference>
<dbReference type="GO" id="GO:0015909">
    <property type="term" value="P:long-chain fatty acid transport"/>
    <property type="evidence" value="ECO:0000314"/>
    <property type="project" value="ARUK-UCL"/>
</dbReference>
<dbReference type="GO" id="GO:0055091">
    <property type="term" value="P:phospholipid homeostasis"/>
    <property type="evidence" value="ECO:0000315"/>
    <property type="project" value="BHF-UCL"/>
</dbReference>
<dbReference type="GO" id="GO:0140214">
    <property type="term" value="P:positive regulation of long-chain fatty acid import into cell"/>
    <property type="evidence" value="ECO:0000314"/>
    <property type="project" value="ARUK-UCL"/>
</dbReference>
<dbReference type="GO" id="GO:0071073">
    <property type="term" value="P:positive regulation of phospholipid biosynthetic process"/>
    <property type="evidence" value="ECO:0000305"/>
    <property type="project" value="BHF-UCL"/>
</dbReference>
<dbReference type="GO" id="GO:0046320">
    <property type="term" value="P:regulation of fatty acid oxidation"/>
    <property type="evidence" value="ECO:0000315"/>
    <property type="project" value="BHF-UCL"/>
</dbReference>
<dbReference type="GO" id="GO:2001245">
    <property type="term" value="P:regulation of phosphatidylcholine biosynthetic process"/>
    <property type="evidence" value="ECO:0000316"/>
    <property type="project" value="MGI"/>
</dbReference>
<dbReference type="GO" id="GO:0070542">
    <property type="term" value="P:response to fatty acid"/>
    <property type="evidence" value="ECO:0007669"/>
    <property type="project" value="Ensembl"/>
</dbReference>
<dbReference type="GO" id="GO:0032868">
    <property type="term" value="P:response to insulin"/>
    <property type="evidence" value="ECO:0007669"/>
    <property type="project" value="Ensembl"/>
</dbReference>
<dbReference type="GO" id="GO:0009410">
    <property type="term" value="P:response to xenobiotic stimulus"/>
    <property type="evidence" value="ECO:0007669"/>
    <property type="project" value="Ensembl"/>
</dbReference>
<dbReference type="FunFam" id="2.40.128.20:FF:000001">
    <property type="entry name" value="Fatty acid-binding protein, adipocyte"/>
    <property type="match status" value="1"/>
</dbReference>
<dbReference type="Gene3D" id="2.40.128.20">
    <property type="match status" value="1"/>
</dbReference>
<dbReference type="InterPro" id="IPR012674">
    <property type="entry name" value="Calycin"/>
</dbReference>
<dbReference type="InterPro" id="IPR000463">
    <property type="entry name" value="Fatty_acid-bd"/>
</dbReference>
<dbReference type="InterPro" id="IPR031259">
    <property type="entry name" value="ILBP"/>
</dbReference>
<dbReference type="InterPro" id="IPR000566">
    <property type="entry name" value="Lipocln_cytosolic_FA-bd_dom"/>
</dbReference>
<dbReference type="PANTHER" id="PTHR11955">
    <property type="entry name" value="FATTY ACID BINDING PROTEIN"/>
    <property type="match status" value="1"/>
</dbReference>
<dbReference type="Pfam" id="PF00061">
    <property type="entry name" value="Lipocalin"/>
    <property type="match status" value="1"/>
</dbReference>
<dbReference type="PRINTS" id="PR00178">
    <property type="entry name" value="FATTYACIDBP"/>
</dbReference>
<dbReference type="SUPFAM" id="SSF50814">
    <property type="entry name" value="Lipocalins"/>
    <property type="match status" value="1"/>
</dbReference>
<dbReference type="PROSITE" id="PS00214">
    <property type="entry name" value="FABP"/>
    <property type="match status" value="1"/>
</dbReference>
<protein>
    <recommendedName>
        <fullName>Fatty acid-binding protein, heart</fullName>
    </recommendedName>
    <alternativeName>
        <fullName>Fatty acid-binding protein 3</fullName>
    </alternativeName>
    <alternativeName>
        <fullName>Heart-type fatty acid-binding protein</fullName>
        <shortName>H-FABP</shortName>
    </alternativeName>
    <alternativeName>
        <fullName>Mammary-derived growth inhibitor</fullName>
        <shortName>MDGI</shortName>
    </alternativeName>
</protein>